<feature type="chain" id="PRO_0000277668" description="E3 ubiquitin-protein ligase HECW2">
    <location>
        <begin position="1"/>
        <end position="1578"/>
    </location>
</feature>
<feature type="domain" description="C2" evidence="4">
    <location>
        <begin position="171"/>
        <end position="298"/>
    </location>
</feature>
<feature type="domain" description="WW 1" evidence="6">
    <location>
        <begin position="813"/>
        <end position="846"/>
    </location>
</feature>
<feature type="domain" description="WW 2" evidence="6">
    <location>
        <begin position="991"/>
        <end position="1024"/>
    </location>
</feature>
<feature type="domain" description="HECT" evidence="5">
    <location>
        <begin position="1243"/>
        <end position="1578"/>
    </location>
</feature>
<feature type="region of interest" description="Disordered" evidence="7">
    <location>
        <begin position="341"/>
        <end position="453"/>
    </location>
</feature>
<feature type="region of interest" description="Disordered" evidence="7">
    <location>
        <begin position="496"/>
        <end position="802"/>
    </location>
</feature>
<feature type="region of interest" description="Interaction with TP73" evidence="1">
    <location>
        <begin position="737"/>
        <end position="1074"/>
    </location>
</feature>
<feature type="region of interest" description="Disordered" evidence="7">
    <location>
        <begin position="1030"/>
        <end position="1075"/>
    </location>
</feature>
<feature type="region of interest" description="Disordered" evidence="7">
    <location>
        <begin position="1167"/>
        <end position="1193"/>
    </location>
</feature>
<feature type="coiled-coil region" evidence="3">
    <location>
        <begin position="853"/>
        <end position="880"/>
    </location>
</feature>
<feature type="compositionally biased region" description="Polar residues" evidence="7">
    <location>
        <begin position="386"/>
        <end position="406"/>
    </location>
</feature>
<feature type="compositionally biased region" description="Basic and acidic residues" evidence="7">
    <location>
        <begin position="518"/>
        <end position="532"/>
    </location>
</feature>
<feature type="compositionally biased region" description="Polar residues" evidence="7">
    <location>
        <begin position="559"/>
        <end position="576"/>
    </location>
</feature>
<feature type="compositionally biased region" description="Low complexity" evidence="7">
    <location>
        <begin position="577"/>
        <end position="593"/>
    </location>
</feature>
<feature type="compositionally biased region" description="Polar residues" evidence="7">
    <location>
        <begin position="597"/>
        <end position="614"/>
    </location>
</feature>
<feature type="compositionally biased region" description="Polar residues" evidence="7">
    <location>
        <begin position="643"/>
        <end position="664"/>
    </location>
</feature>
<feature type="compositionally biased region" description="Polar residues" evidence="7">
    <location>
        <begin position="688"/>
        <end position="708"/>
    </location>
</feature>
<feature type="compositionally biased region" description="Low complexity" evidence="7">
    <location>
        <begin position="721"/>
        <end position="735"/>
    </location>
</feature>
<feature type="compositionally biased region" description="Low complexity" evidence="7">
    <location>
        <begin position="746"/>
        <end position="755"/>
    </location>
</feature>
<feature type="compositionally biased region" description="Low complexity" evidence="7">
    <location>
        <begin position="769"/>
        <end position="782"/>
    </location>
</feature>
<feature type="compositionally biased region" description="Basic residues" evidence="7">
    <location>
        <begin position="1037"/>
        <end position="1046"/>
    </location>
</feature>
<feature type="compositionally biased region" description="Polar residues" evidence="7">
    <location>
        <begin position="1167"/>
        <end position="1187"/>
    </location>
</feature>
<feature type="active site" description="Glycyl thioester intermediate" evidence="5">
    <location>
        <position position="1546"/>
    </location>
</feature>
<feature type="modified residue" description="Phosphoserine" evidence="11">
    <location>
        <position position="48"/>
    </location>
</feature>
<feature type="modified residue" description="Phosphoserine" evidence="2">
    <location>
        <position position="858"/>
    </location>
</feature>
<feature type="modified residue" description="Phosphoserine" evidence="2">
    <location>
        <position position="915"/>
    </location>
</feature>
<feature type="modified residue" description="Phosphoserine" evidence="2">
    <location>
        <position position="1181"/>
    </location>
</feature>
<feature type="splice variant" id="VSP_023078" description="In isoform 2." evidence="8 9">
    <location>
        <begin position="295"/>
        <end position="1578"/>
    </location>
</feature>
<feature type="sequence conflict" description="In Ref. 2; BAC31406." evidence="10" ref="2">
    <original>H</original>
    <variation>R</variation>
    <location>
        <position position="226"/>
    </location>
</feature>
<sequence length="1578" mass="176235">MASSAREHLLFVRRRNPQMRYTLSPENLQSLAAQNSMPENMALQRANSDTDLVTSESRSSLTASMYEYTLGQAQNLIIFWDIKEEVDPSDWIGLYHIDENSPANFWDSKNRGVTGTQKGQIVWRIEPGPYFMEPEIKICFKYYHGISGALRATTPCITVKNPAVMMGAEGMEGGASGSLHSRKLVSFTLSDLRAVGLKKGMFFNPDPYLKMSIQPGKKSSFPTCAHHGQERRSTIISNTTNPIWHREKYSFFALLTDVLEIEIKDKFAKSRPIIKRFLGKLTIPVQRLLERQAGDQMLSYNLGRRLPADHVSGYLQFKVEVTSSAHEDASPEAVGTILGVHTVNGDLGSPSDEEDMPGSHHDSTICANGPVSEDSVADGTPKHSFRTSSTLEIDTEDLISTSSRNSPPRGRQDSLNDYLDAIEHNGPARPGAASSSERSMGASPKLRSSFPTDTRLNAMLHIDSDEEDHEFQQDLGYPSSLEEEGGLIMCSRASRIDDGSLTSQTKPEDDNPVENEDASIHETASLEERLENLPEVADGSLPSSTAPDENEANLEPQPSADQGSTELCSSQEVDQPTSGADAGASDTSGGSRRAASETESLDQGSEPSQVSSETEPSDPARTESVSEASTRPEGESDPEGADSSCNESVTTQLSSVETRCSSLESARFPETPAFSSQEEEDGACAAEPTSSGPAEGSQESVCTPSSLPAVQVPSREEEGSAAEAAALSEQGELGEVWQRRGSLEGAAAAAPAAAATDSQPQEDGDAGDAQGACEGATAQEEGATGGSQTNGHQPLRSLPSVRQDVSRYQRVDEALPPNWEARIDSHGRIFYVDHVNRTTTWQRPTAPPAPQVLQRSNSIQQMEQLNRRYQSIRRTMTNERPEENTSAIDGAGEEADFHQASADFRRENVLPHSTSRSRLTLLLQSPPVKFLISPEFFTVLHSNPSAYRMFTNNTCLKHMITKVRRDTHHFERYQHNRDLVGFLNMFANKQLELPRGWEMKHDHQGKAFFVDHNSRTTTFIDPRLPLQSSRPTSALVHRQHLTRQRSHSAGEVGEDSRHAGPPVLPRPSSTFNTVSRPQYQDMVPVAYNDKIVAFLRQPNILEILQERQPDLARNHSLREKIQFIRTEGTPGLVRLSSDADLVMLLSLFEEEIMSYVPPHALLHPSYCQSPRGSPVSSPQNSPGTQRANARAPAPYKRDFEAKLRNFYRKLETKGYGQGPGKLKLIIRRDHLLEDAFNQIMGYSRKDLQRNKLYVTFVGEEGLDYSGPSREFFFLVSRELFNPYYGLFEYSANDTYTVQISPMSAFVDNHHEWFRFSGRILGLALIHQYLLDAFFTRPFYKALLRILCDLSDLEYLDEEFHQSLQWMKDNDIHDILDLTFTVNEEVFGQITERELKPGGANIPVTEKNKKEYIERMVKWRIERGVVQQTESLVRGFYEVVDARLVSVFDARELELVIAGTAEIDLNDWRNNTEYRGGYHDNHIVIRWFWAAVERFNNEQRLRLLQFVTGTSSIPYEGFASLRGSNGPRRFCVEKWGKITALPRAHTCFNRLDLPPYPSFSMLYEKLLTAVEETSTFGLE</sequence>
<evidence type="ECO:0000250" key="1"/>
<evidence type="ECO:0000250" key="2">
    <source>
        <dbReference type="UniProtKB" id="Q9P2P5"/>
    </source>
</evidence>
<evidence type="ECO:0000255" key="3"/>
<evidence type="ECO:0000255" key="4">
    <source>
        <dbReference type="PROSITE-ProRule" id="PRU00041"/>
    </source>
</evidence>
<evidence type="ECO:0000255" key="5">
    <source>
        <dbReference type="PROSITE-ProRule" id="PRU00104"/>
    </source>
</evidence>
<evidence type="ECO:0000255" key="6">
    <source>
        <dbReference type="PROSITE-ProRule" id="PRU00224"/>
    </source>
</evidence>
<evidence type="ECO:0000256" key="7">
    <source>
        <dbReference type="SAM" id="MobiDB-lite"/>
    </source>
</evidence>
<evidence type="ECO:0000303" key="8">
    <source>
    </source>
</evidence>
<evidence type="ECO:0000303" key="9">
    <source>
    </source>
</evidence>
<evidence type="ECO:0000305" key="10"/>
<evidence type="ECO:0007744" key="11">
    <source>
    </source>
</evidence>
<name>HECW2_MOUSE</name>
<reference key="1">
    <citation type="submission" date="2004-06" db="EMBL/GenBank/DDBJ databases">
        <title>Mus musculus NEDL2 mRNA for NEDD4-like ubiquitin ligase 2.</title>
        <authorList>
            <person name="Miyazaki K."/>
            <person name="Takeda M."/>
            <person name="Aiyama Y."/>
            <person name="Nakagawara A."/>
        </authorList>
    </citation>
    <scope>NUCLEOTIDE SEQUENCE [MRNA] (ISOFORM 1)</scope>
</reference>
<reference key="2">
    <citation type="journal article" date="2005" name="Science">
        <title>The transcriptional landscape of the mammalian genome.</title>
        <authorList>
            <person name="Carninci P."/>
            <person name="Kasukawa T."/>
            <person name="Katayama S."/>
            <person name="Gough J."/>
            <person name="Frith M.C."/>
            <person name="Maeda N."/>
            <person name="Oyama R."/>
            <person name="Ravasi T."/>
            <person name="Lenhard B."/>
            <person name="Wells C."/>
            <person name="Kodzius R."/>
            <person name="Shimokawa K."/>
            <person name="Bajic V.B."/>
            <person name="Brenner S.E."/>
            <person name="Batalov S."/>
            <person name="Forrest A.R."/>
            <person name="Zavolan M."/>
            <person name="Davis M.J."/>
            <person name="Wilming L.G."/>
            <person name="Aidinis V."/>
            <person name="Allen J.E."/>
            <person name="Ambesi-Impiombato A."/>
            <person name="Apweiler R."/>
            <person name="Aturaliya R.N."/>
            <person name="Bailey T.L."/>
            <person name="Bansal M."/>
            <person name="Baxter L."/>
            <person name="Beisel K.W."/>
            <person name="Bersano T."/>
            <person name="Bono H."/>
            <person name="Chalk A.M."/>
            <person name="Chiu K.P."/>
            <person name="Choudhary V."/>
            <person name="Christoffels A."/>
            <person name="Clutterbuck D.R."/>
            <person name="Crowe M.L."/>
            <person name="Dalla E."/>
            <person name="Dalrymple B.P."/>
            <person name="de Bono B."/>
            <person name="Della Gatta G."/>
            <person name="di Bernardo D."/>
            <person name="Down T."/>
            <person name="Engstrom P."/>
            <person name="Fagiolini M."/>
            <person name="Faulkner G."/>
            <person name="Fletcher C.F."/>
            <person name="Fukushima T."/>
            <person name="Furuno M."/>
            <person name="Futaki S."/>
            <person name="Gariboldi M."/>
            <person name="Georgii-Hemming P."/>
            <person name="Gingeras T.R."/>
            <person name="Gojobori T."/>
            <person name="Green R.E."/>
            <person name="Gustincich S."/>
            <person name="Harbers M."/>
            <person name="Hayashi Y."/>
            <person name="Hensch T.K."/>
            <person name="Hirokawa N."/>
            <person name="Hill D."/>
            <person name="Huminiecki L."/>
            <person name="Iacono M."/>
            <person name="Ikeo K."/>
            <person name="Iwama A."/>
            <person name="Ishikawa T."/>
            <person name="Jakt M."/>
            <person name="Kanapin A."/>
            <person name="Katoh M."/>
            <person name="Kawasawa Y."/>
            <person name="Kelso J."/>
            <person name="Kitamura H."/>
            <person name="Kitano H."/>
            <person name="Kollias G."/>
            <person name="Krishnan S.P."/>
            <person name="Kruger A."/>
            <person name="Kummerfeld S.K."/>
            <person name="Kurochkin I.V."/>
            <person name="Lareau L.F."/>
            <person name="Lazarevic D."/>
            <person name="Lipovich L."/>
            <person name="Liu J."/>
            <person name="Liuni S."/>
            <person name="McWilliam S."/>
            <person name="Madan Babu M."/>
            <person name="Madera M."/>
            <person name="Marchionni L."/>
            <person name="Matsuda H."/>
            <person name="Matsuzawa S."/>
            <person name="Miki H."/>
            <person name="Mignone F."/>
            <person name="Miyake S."/>
            <person name="Morris K."/>
            <person name="Mottagui-Tabar S."/>
            <person name="Mulder N."/>
            <person name="Nakano N."/>
            <person name="Nakauchi H."/>
            <person name="Ng P."/>
            <person name="Nilsson R."/>
            <person name="Nishiguchi S."/>
            <person name="Nishikawa S."/>
            <person name="Nori F."/>
            <person name="Ohara O."/>
            <person name="Okazaki Y."/>
            <person name="Orlando V."/>
            <person name="Pang K.C."/>
            <person name="Pavan W.J."/>
            <person name="Pavesi G."/>
            <person name="Pesole G."/>
            <person name="Petrovsky N."/>
            <person name="Piazza S."/>
            <person name="Reed J."/>
            <person name="Reid J.F."/>
            <person name="Ring B.Z."/>
            <person name="Ringwald M."/>
            <person name="Rost B."/>
            <person name="Ruan Y."/>
            <person name="Salzberg S.L."/>
            <person name="Sandelin A."/>
            <person name="Schneider C."/>
            <person name="Schoenbach C."/>
            <person name="Sekiguchi K."/>
            <person name="Semple C.A."/>
            <person name="Seno S."/>
            <person name="Sessa L."/>
            <person name="Sheng Y."/>
            <person name="Shibata Y."/>
            <person name="Shimada H."/>
            <person name="Shimada K."/>
            <person name="Silva D."/>
            <person name="Sinclair B."/>
            <person name="Sperling S."/>
            <person name="Stupka E."/>
            <person name="Sugiura K."/>
            <person name="Sultana R."/>
            <person name="Takenaka Y."/>
            <person name="Taki K."/>
            <person name="Tammoja K."/>
            <person name="Tan S.L."/>
            <person name="Tang S."/>
            <person name="Taylor M.S."/>
            <person name="Tegner J."/>
            <person name="Teichmann S.A."/>
            <person name="Ueda H.R."/>
            <person name="van Nimwegen E."/>
            <person name="Verardo R."/>
            <person name="Wei C.L."/>
            <person name="Yagi K."/>
            <person name="Yamanishi H."/>
            <person name="Zabarovsky E."/>
            <person name="Zhu S."/>
            <person name="Zimmer A."/>
            <person name="Hide W."/>
            <person name="Bult C."/>
            <person name="Grimmond S.M."/>
            <person name="Teasdale R.D."/>
            <person name="Liu E.T."/>
            <person name="Brusic V."/>
            <person name="Quackenbush J."/>
            <person name="Wahlestedt C."/>
            <person name="Mattick J.S."/>
            <person name="Hume D.A."/>
            <person name="Kai C."/>
            <person name="Sasaki D."/>
            <person name="Tomaru Y."/>
            <person name="Fukuda S."/>
            <person name="Kanamori-Katayama M."/>
            <person name="Suzuki M."/>
            <person name="Aoki J."/>
            <person name="Arakawa T."/>
            <person name="Iida J."/>
            <person name="Imamura K."/>
            <person name="Itoh M."/>
            <person name="Kato T."/>
            <person name="Kawaji H."/>
            <person name="Kawagashira N."/>
            <person name="Kawashima T."/>
            <person name="Kojima M."/>
            <person name="Kondo S."/>
            <person name="Konno H."/>
            <person name="Nakano K."/>
            <person name="Ninomiya N."/>
            <person name="Nishio T."/>
            <person name="Okada M."/>
            <person name="Plessy C."/>
            <person name="Shibata K."/>
            <person name="Shiraki T."/>
            <person name="Suzuki S."/>
            <person name="Tagami M."/>
            <person name="Waki K."/>
            <person name="Watahiki A."/>
            <person name="Okamura-Oho Y."/>
            <person name="Suzuki H."/>
            <person name="Kawai J."/>
            <person name="Hayashizaki Y."/>
        </authorList>
    </citation>
    <scope>NUCLEOTIDE SEQUENCE [LARGE SCALE MRNA] (ISOFORM 2)</scope>
    <source>
        <strain>C57BL/6J</strain>
        <tissue>Cerebellum</tissue>
    </source>
</reference>
<reference key="3">
    <citation type="journal article" date="2004" name="Genome Res.">
        <title>The status, quality, and expansion of the NIH full-length cDNA project: the Mammalian Gene Collection (MGC).</title>
        <authorList>
            <consortium name="The MGC Project Team"/>
        </authorList>
    </citation>
    <scope>NUCLEOTIDE SEQUENCE [LARGE SCALE MRNA] (ISOFORM 2)</scope>
</reference>
<reference key="4">
    <citation type="journal article" date="2003" name="DNA Res.">
        <title>Prediction of the coding sequences of mouse homologues of KIAA gene: III. The complete nucleotide sequences of 500 mouse KIAA-homologous cDNAs identified by screening of terminal sequences of cDNA clones randomly sampled from size-fractionated libraries.</title>
        <authorList>
            <person name="Okazaki N."/>
            <person name="Kikuno R."/>
            <person name="Ohara R."/>
            <person name="Inamoto S."/>
            <person name="Koseki H."/>
            <person name="Hiraoka S."/>
            <person name="Saga Y."/>
            <person name="Nagase T."/>
            <person name="Ohara O."/>
            <person name="Koga H."/>
        </authorList>
    </citation>
    <scope>NUCLEOTIDE SEQUENCE [LARGE SCALE MRNA] OF 124-1578 (ISOFORM 1)</scope>
    <source>
        <tissue>Brain</tissue>
    </source>
</reference>
<reference key="5">
    <citation type="journal article" date="2010" name="Cell">
        <title>A tissue-specific atlas of mouse protein phosphorylation and expression.</title>
        <authorList>
            <person name="Huttlin E.L."/>
            <person name="Jedrychowski M.P."/>
            <person name="Elias J.E."/>
            <person name="Goswami T."/>
            <person name="Rad R."/>
            <person name="Beausoleil S.A."/>
            <person name="Villen J."/>
            <person name="Haas W."/>
            <person name="Sowa M.E."/>
            <person name="Gygi S.P."/>
        </authorList>
    </citation>
    <scope>PHOSPHORYLATION [LARGE SCALE ANALYSIS] AT SER-48</scope>
    <scope>IDENTIFICATION BY MASS SPECTROMETRY [LARGE SCALE ANALYSIS]</scope>
    <source>
        <tissue>Brain</tissue>
        <tissue>Brown adipose tissue</tissue>
        <tissue>Testis</tissue>
    </source>
</reference>
<protein>
    <recommendedName>
        <fullName>E3 ubiquitin-protein ligase HECW2</fullName>
        <ecNumber>2.3.2.26</ecNumber>
    </recommendedName>
    <alternativeName>
        <fullName>HECT, C2 and WW domain-containing protein 2</fullName>
    </alternativeName>
    <alternativeName>
        <fullName>HECT-type E3 ubiquitin transferase HECW2</fullName>
    </alternativeName>
    <alternativeName>
        <fullName>NEDD4-like E3 ubiquitin-protein ligase 2</fullName>
    </alternativeName>
</protein>
<gene>
    <name type="primary">Hecw2</name>
    <name type="synonym">Kiaa1301</name>
    <name type="synonym">Nedl2</name>
</gene>
<comment type="function">
    <text evidence="2">E3 ubiquitin-protein ligase that mediates ubiquitination of TP73. Acts to stabilize TP73 and enhance activation of transcription by TP73. Involved in the regulation of mitotic metaphase/anaphase transition.</text>
</comment>
<comment type="catalytic activity">
    <reaction>
        <text>S-ubiquitinyl-[E2 ubiquitin-conjugating enzyme]-L-cysteine + [acceptor protein]-L-lysine = [E2 ubiquitin-conjugating enzyme]-L-cysteine + N(6)-ubiquitinyl-[acceptor protein]-L-lysine.</text>
        <dbReference type="EC" id="2.3.2.26"/>
    </reaction>
</comment>
<comment type="pathway">
    <text>Protein modification; protein ubiquitination.</text>
</comment>
<comment type="subunit">
    <text evidence="2">Interacts with TP73 (By similarity). Interacts with FZR1 (By similarity).</text>
</comment>
<comment type="subcellular location">
    <subcellularLocation>
        <location evidence="1">Cytoplasm</location>
    </subcellularLocation>
    <subcellularLocation>
        <location evidence="2">Cytoplasm</location>
        <location evidence="2">Cytoskeleton</location>
        <location evidence="2">Spindle</location>
    </subcellularLocation>
</comment>
<comment type="alternative products">
    <event type="alternative splicing"/>
    <isoform>
        <id>Q6I6G8-1</id>
        <name>1</name>
        <sequence type="displayed"/>
    </isoform>
    <isoform>
        <id>Q6I6G8-2</id>
        <name>2</name>
        <sequence type="described" ref="VSP_023078"/>
    </isoform>
</comment>
<dbReference type="EC" id="2.3.2.26"/>
<dbReference type="EMBL" id="AB182244">
    <property type="protein sequence ID" value="BAD23960.1"/>
    <property type="molecule type" value="mRNA"/>
</dbReference>
<dbReference type="EMBL" id="AK042922">
    <property type="protein sequence ID" value="BAC31406.1"/>
    <property type="molecule type" value="mRNA"/>
</dbReference>
<dbReference type="EMBL" id="BC107219">
    <property type="protein sequence ID" value="AAI07220.1"/>
    <property type="molecule type" value="mRNA"/>
</dbReference>
<dbReference type="EMBL" id="AK129325">
    <property type="protein sequence ID" value="BAC98135.1"/>
    <property type="molecule type" value="mRNA"/>
</dbReference>
<dbReference type="CCDS" id="CCDS14956.1">
    <molecule id="Q6I6G8-1"/>
</dbReference>
<dbReference type="CCDS" id="CCDS14957.1">
    <molecule id="Q6I6G8-2"/>
</dbReference>
<dbReference type="RefSeq" id="NP_001001883.1">
    <molecule id="Q6I6G8-1"/>
    <property type="nucleotide sequence ID" value="NM_001001883.3"/>
</dbReference>
<dbReference type="RefSeq" id="NP_766243.2">
    <molecule id="Q6I6G8-2"/>
    <property type="nucleotide sequence ID" value="NM_172655.3"/>
</dbReference>
<dbReference type="RefSeq" id="XP_006496129.1">
    <molecule id="Q6I6G8-1"/>
    <property type="nucleotide sequence ID" value="XM_006496066.5"/>
</dbReference>
<dbReference type="RefSeq" id="XP_006496130.1">
    <molecule id="Q6I6G8-1"/>
    <property type="nucleotide sequence ID" value="XM_006496067.3"/>
</dbReference>
<dbReference type="RefSeq" id="XP_006496131.1">
    <molecule id="Q6I6G8-1"/>
    <property type="nucleotide sequence ID" value="XM_006496068.5"/>
</dbReference>
<dbReference type="BMRB" id="Q6I6G8"/>
<dbReference type="SMR" id="Q6I6G8"/>
<dbReference type="BioGRID" id="236715">
    <property type="interactions" value="1"/>
</dbReference>
<dbReference type="FunCoup" id="Q6I6G8">
    <property type="interactions" value="457"/>
</dbReference>
<dbReference type="STRING" id="10090.ENSMUSP00000113283"/>
<dbReference type="iPTMnet" id="Q6I6G8"/>
<dbReference type="PhosphoSitePlus" id="Q6I6G8"/>
<dbReference type="jPOST" id="Q6I6G8"/>
<dbReference type="PaxDb" id="10090-ENSMUSP00000113283"/>
<dbReference type="PeptideAtlas" id="Q6I6G8"/>
<dbReference type="ProteomicsDB" id="269691">
    <molecule id="Q6I6G8-1"/>
</dbReference>
<dbReference type="ProteomicsDB" id="269692">
    <molecule id="Q6I6G8-2"/>
</dbReference>
<dbReference type="Antibodypedia" id="34059">
    <property type="antibodies" value="179 antibodies from 26 providers"/>
</dbReference>
<dbReference type="DNASU" id="329152"/>
<dbReference type="Ensembl" id="ENSMUST00000087659.11">
    <molecule id="Q6I6G8-1"/>
    <property type="protein sequence ID" value="ENSMUSP00000084942.5"/>
    <property type="gene ID" value="ENSMUSG00000042807.16"/>
</dbReference>
<dbReference type="Ensembl" id="ENSMUST00000097741.3">
    <molecule id="Q6I6G8-2"/>
    <property type="protein sequence ID" value="ENSMUSP00000095348.3"/>
    <property type="gene ID" value="ENSMUSG00000042807.16"/>
</dbReference>
<dbReference type="Ensembl" id="ENSMUST00000120904.8">
    <molecule id="Q6I6G8-1"/>
    <property type="protein sequence ID" value="ENSMUSP00000113283.2"/>
    <property type="gene ID" value="ENSMUSG00000042807.16"/>
</dbReference>
<dbReference type="GeneID" id="329152"/>
<dbReference type="KEGG" id="mmu:329152"/>
<dbReference type="UCSC" id="uc007azk.2">
    <molecule id="Q6I6G8-1"/>
    <property type="organism name" value="mouse"/>
</dbReference>
<dbReference type="AGR" id="MGI:2685817"/>
<dbReference type="CTD" id="57520"/>
<dbReference type="MGI" id="MGI:2685817">
    <property type="gene designation" value="Hecw2"/>
</dbReference>
<dbReference type="VEuPathDB" id="HostDB:ENSMUSG00000042807"/>
<dbReference type="eggNOG" id="KOG0940">
    <property type="taxonomic scope" value="Eukaryota"/>
</dbReference>
<dbReference type="GeneTree" id="ENSGT00940000155466"/>
<dbReference type="HOGENOM" id="CLU_002173_14_0_1"/>
<dbReference type="InParanoid" id="Q6I6G8"/>
<dbReference type="OMA" id="TAGQHRE"/>
<dbReference type="OrthoDB" id="5987976at2759"/>
<dbReference type="PhylomeDB" id="Q6I6G8"/>
<dbReference type="TreeFam" id="TF313938"/>
<dbReference type="Reactome" id="R-MMU-983168">
    <property type="pathway name" value="Antigen processing: Ubiquitination &amp; Proteasome degradation"/>
</dbReference>
<dbReference type="UniPathway" id="UPA00143"/>
<dbReference type="BioGRID-ORCS" id="329152">
    <property type="hits" value="0 hits in 78 CRISPR screens"/>
</dbReference>
<dbReference type="CD-CODE" id="CE726F99">
    <property type="entry name" value="Postsynaptic density"/>
</dbReference>
<dbReference type="ChiTaRS" id="Hecw2">
    <property type="organism name" value="mouse"/>
</dbReference>
<dbReference type="PRO" id="PR:Q6I6G8"/>
<dbReference type="Proteomes" id="UP000000589">
    <property type="component" value="Chromosome 1"/>
</dbReference>
<dbReference type="RNAct" id="Q6I6G8">
    <property type="molecule type" value="protein"/>
</dbReference>
<dbReference type="Bgee" id="ENSMUSG00000042807">
    <property type="expression patterns" value="Expressed in epithelium of stomach and 186 other cell types or tissues"/>
</dbReference>
<dbReference type="ExpressionAtlas" id="Q6I6G8">
    <property type="expression patterns" value="baseline and differential"/>
</dbReference>
<dbReference type="GO" id="GO:0005737">
    <property type="term" value="C:cytoplasm"/>
    <property type="evidence" value="ECO:0007669"/>
    <property type="project" value="UniProtKB-SubCell"/>
</dbReference>
<dbReference type="GO" id="GO:0072686">
    <property type="term" value="C:mitotic spindle"/>
    <property type="evidence" value="ECO:0007669"/>
    <property type="project" value="Ensembl"/>
</dbReference>
<dbReference type="GO" id="GO:0004842">
    <property type="term" value="F:ubiquitin-protein transferase activity"/>
    <property type="evidence" value="ECO:0007669"/>
    <property type="project" value="InterPro"/>
</dbReference>
<dbReference type="GO" id="GO:0016567">
    <property type="term" value="P:protein ubiquitination"/>
    <property type="evidence" value="ECO:0007669"/>
    <property type="project" value="UniProtKB-UniPathway"/>
</dbReference>
<dbReference type="GO" id="GO:0030071">
    <property type="term" value="P:regulation of mitotic metaphase/anaphase transition"/>
    <property type="evidence" value="ECO:0007669"/>
    <property type="project" value="Ensembl"/>
</dbReference>
<dbReference type="CDD" id="cd08691">
    <property type="entry name" value="C2_NEDL1-like"/>
    <property type="match status" value="1"/>
</dbReference>
<dbReference type="CDD" id="cd00078">
    <property type="entry name" value="HECTc"/>
    <property type="match status" value="1"/>
</dbReference>
<dbReference type="CDD" id="cd00201">
    <property type="entry name" value="WW"/>
    <property type="match status" value="2"/>
</dbReference>
<dbReference type="FunFam" id="3.30.2410.10:FF:000002">
    <property type="entry name" value="E3 ubiquitin-protein ligase HECW2"/>
    <property type="match status" value="1"/>
</dbReference>
<dbReference type="FunFam" id="3.90.1750.10:FF:000036">
    <property type="entry name" value="E3 ubiquitin-protein ligase HECW2"/>
    <property type="match status" value="1"/>
</dbReference>
<dbReference type="FunFam" id="2.20.70.10:FF:000007">
    <property type="entry name" value="E3 ubiquitin-protein ligase HECW2 isoform X1"/>
    <property type="match status" value="1"/>
</dbReference>
<dbReference type="FunFam" id="2.60.40.2840:FF:000001">
    <property type="entry name" value="E3 ubiquitin-protein ligase HECW2 isoform X1"/>
    <property type="match status" value="1"/>
</dbReference>
<dbReference type="FunFam" id="3.30.2160.10:FF:000005">
    <property type="entry name" value="E3 ubiquitin-protein ligase HECW2 isoform X1"/>
    <property type="match status" value="1"/>
</dbReference>
<dbReference type="FunFam" id="3.90.1750.10:FF:000004">
    <property type="entry name" value="E3 ubiquitin-protein ligase HECW2 isoform X1"/>
    <property type="match status" value="1"/>
</dbReference>
<dbReference type="FunFam" id="2.20.70.10:FF:000048">
    <property type="entry name" value="HECT, C2 and WW domain-containing E3 ubiquitin protein ligase 1"/>
    <property type="match status" value="1"/>
</dbReference>
<dbReference type="FunFam" id="2.60.40.150:FF:000035">
    <property type="entry name" value="LOW QUALITY PROTEIN: E3 ubiquitin-protein ligase HECW2"/>
    <property type="match status" value="1"/>
</dbReference>
<dbReference type="Gene3D" id="2.20.70.10">
    <property type="match status" value="2"/>
</dbReference>
<dbReference type="Gene3D" id="2.60.40.2840">
    <property type="match status" value="1"/>
</dbReference>
<dbReference type="Gene3D" id="2.60.40.150">
    <property type="entry name" value="C2 domain"/>
    <property type="match status" value="1"/>
</dbReference>
<dbReference type="Gene3D" id="3.30.2160.10">
    <property type="entry name" value="Hect, E3 ligase catalytic domain"/>
    <property type="match status" value="1"/>
</dbReference>
<dbReference type="Gene3D" id="3.30.2410.10">
    <property type="entry name" value="Hect, E3 ligase catalytic domain"/>
    <property type="match status" value="1"/>
</dbReference>
<dbReference type="Gene3D" id="3.90.1750.10">
    <property type="entry name" value="Hect, E3 ligase catalytic domains"/>
    <property type="match status" value="1"/>
</dbReference>
<dbReference type="InterPro" id="IPR000008">
    <property type="entry name" value="C2_dom"/>
</dbReference>
<dbReference type="InterPro" id="IPR035892">
    <property type="entry name" value="C2_domain_sf"/>
</dbReference>
<dbReference type="InterPro" id="IPR037795">
    <property type="entry name" value="C2_HECW"/>
</dbReference>
<dbReference type="InterPro" id="IPR050409">
    <property type="entry name" value="E3_ubiq-protein_ligase"/>
</dbReference>
<dbReference type="InterPro" id="IPR000569">
    <property type="entry name" value="HECT_dom"/>
</dbReference>
<dbReference type="InterPro" id="IPR035983">
    <property type="entry name" value="Hect_E3_ubiquitin_ligase"/>
</dbReference>
<dbReference type="InterPro" id="IPR040524">
    <property type="entry name" value="HECW1_helix"/>
</dbReference>
<dbReference type="InterPro" id="IPR032348">
    <property type="entry name" value="HECW_N"/>
</dbReference>
<dbReference type="InterPro" id="IPR001202">
    <property type="entry name" value="WW_dom"/>
</dbReference>
<dbReference type="InterPro" id="IPR036020">
    <property type="entry name" value="WW_dom_sf"/>
</dbReference>
<dbReference type="PANTHER" id="PTHR11254:SF127">
    <property type="entry name" value="E3 UBIQUITIN-PROTEIN LIGASE HECW2"/>
    <property type="match status" value="1"/>
</dbReference>
<dbReference type="PANTHER" id="PTHR11254">
    <property type="entry name" value="HECT DOMAIN UBIQUITIN-PROTEIN LIGASE"/>
    <property type="match status" value="1"/>
</dbReference>
<dbReference type="Pfam" id="PF00168">
    <property type="entry name" value="C2"/>
    <property type="match status" value="1"/>
</dbReference>
<dbReference type="Pfam" id="PF00632">
    <property type="entry name" value="HECT"/>
    <property type="match status" value="1"/>
</dbReference>
<dbReference type="Pfam" id="PF18436">
    <property type="entry name" value="HECW1_helix"/>
    <property type="match status" value="1"/>
</dbReference>
<dbReference type="Pfam" id="PF16562">
    <property type="entry name" value="HECW_N"/>
    <property type="match status" value="1"/>
</dbReference>
<dbReference type="Pfam" id="PF00397">
    <property type="entry name" value="WW"/>
    <property type="match status" value="1"/>
</dbReference>
<dbReference type="SMART" id="SM00239">
    <property type="entry name" value="C2"/>
    <property type="match status" value="1"/>
</dbReference>
<dbReference type="SMART" id="SM00119">
    <property type="entry name" value="HECTc"/>
    <property type="match status" value="1"/>
</dbReference>
<dbReference type="SMART" id="SM00456">
    <property type="entry name" value="WW"/>
    <property type="match status" value="2"/>
</dbReference>
<dbReference type="SUPFAM" id="SSF49562">
    <property type="entry name" value="C2 domain (Calcium/lipid-binding domain, CaLB)"/>
    <property type="match status" value="1"/>
</dbReference>
<dbReference type="SUPFAM" id="SSF56204">
    <property type="entry name" value="Hect, E3 ligase catalytic domain"/>
    <property type="match status" value="1"/>
</dbReference>
<dbReference type="SUPFAM" id="SSF51045">
    <property type="entry name" value="WW domain"/>
    <property type="match status" value="2"/>
</dbReference>
<dbReference type="PROSITE" id="PS50004">
    <property type="entry name" value="C2"/>
    <property type="match status" value="1"/>
</dbReference>
<dbReference type="PROSITE" id="PS50237">
    <property type="entry name" value="HECT"/>
    <property type="match status" value="1"/>
</dbReference>
<dbReference type="PROSITE" id="PS01159">
    <property type="entry name" value="WW_DOMAIN_1"/>
    <property type="match status" value="2"/>
</dbReference>
<dbReference type="PROSITE" id="PS50020">
    <property type="entry name" value="WW_DOMAIN_2"/>
    <property type="match status" value="2"/>
</dbReference>
<accession>Q6I6G8</accession>
<accession>Q3KNL8</accession>
<accession>Q6ZPU4</accession>
<accession>Q8C956</accession>
<organism>
    <name type="scientific">Mus musculus</name>
    <name type="common">Mouse</name>
    <dbReference type="NCBI Taxonomy" id="10090"/>
    <lineage>
        <taxon>Eukaryota</taxon>
        <taxon>Metazoa</taxon>
        <taxon>Chordata</taxon>
        <taxon>Craniata</taxon>
        <taxon>Vertebrata</taxon>
        <taxon>Euteleostomi</taxon>
        <taxon>Mammalia</taxon>
        <taxon>Eutheria</taxon>
        <taxon>Euarchontoglires</taxon>
        <taxon>Glires</taxon>
        <taxon>Rodentia</taxon>
        <taxon>Myomorpha</taxon>
        <taxon>Muroidea</taxon>
        <taxon>Muridae</taxon>
        <taxon>Murinae</taxon>
        <taxon>Mus</taxon>
        <taxon>Mus</taxon>
    </lineage>
</organism>
<keyword id="KW-0025">Alternative splicing</keyword>
<keyword id="KW-0175">Coiled coil</keyword>
<keyword id="KW-0963">Cytoplasm</keyword>
<keyword id="KW-0206">Cytoskeleton</keyword>
<keyword id="KW-0597">Phosphoprotein</keyword>
<keyword id="KW-1185">Reference proteome</keyword>
<keyword id="KW-0677">Repeat</keyword>
<keyword id="KW-0808">Transferase</keyword>
<keyword id="KW-0833">Ubl conjugation pathway</keyword>
<proteinExistence type="evidence at protein level"/>